<protein>
    <recommendedName>
        <fullName evidence="2">Large ribosomal subunit protein uL10</fullName>
    </recommendedName>
    <alternativeName>
        <fullName>50S ribosomal protein L10</fullName>
    </alternativeName>
</protein>
<evidence type="ECO:0000250" key="1"/>
<evidence type="ECO:0000305" key="2"/>
<gene>
    <name type="primary">rplJ</name>
</gene>
<accession>P41192</accession>
<feature type="initiator methionine" description="Removed" evidence="1">
    <location>
        <position position="1"/>
    </location>
</feature>
<feature type="chain" id="PRO_0000154702" description="Large ribosomal subunit protein uL10">
    <location>
        <begin position="2"/>
        <end position="86" status="greater than"/>
    </location>
</feature>
<feature type="non-terminal residue">
    <location>
        <position position="86"/>
    </location>
</feature>
<name>RL10_SERMA</name>
<reference key="1">
    <citation type="submission" date="1993-08" db="EMBL/GenBank/DDBJ databases">
        <authorList>
            <person name="Zhyvoloup A.N."/>
        </authorList>
    </citation>
    <scope>NUCLEOTIDE SEQUENCE [GENOMIC DNA]</scope>
</reference>
<keyword id="KW-0687">Ribonucleoprotein</keyword>
<keyword id="KW-0689">Ribosomal protein</keyword>
<keyword id="KW-0694">RNA-binding</keyword>
<keyword id="KW-0699">rRNA-binding</keyword>
<dbReference type="EMBL" id="X74447">
    <property type="protein sequence ID" value="CAA52458.1"/>
    <property type="molecule type" value="Genomic_DNA"/>
</dbReference>
<dbReference type="PIR" id="S35979">
    <property type="entry name" value="S35979"/>
</dbReference>
<dbReference type="STRING" id="273526.SMDB11_4375"/>
<dbReference type="GO" id="GO:0015934">
    <property type="term" value="C:large ribosomal subunit"/>
    <property type="evidence" value="ECO:0007669"/>
    <property type="project" value="InterPro"/>
</dbReference>
<dbReference type="GO" id="GO:0019843">
    <property type="term" value="F:rRNA binding"/>
    <property type="evidence" value="ECO:0007669"/>
    <property type="project" value="UniProtKB-KW"/>
</dbReference>
<dbReference type="GO" id="GO:0003735">
    <property type="term" value="F:structural constituent of ribosome"/>
    <property type="evidence" value="ECO:0007669"/>
    <property type="project" value="InterPro"/>
</dbReference>
<dbReference type="GO" id="GO:0006412">
    <property type="term" value="P:translation"/>
    <property type="evidence" value="ECO:0007669"/>
    <property type="project" value="InterPro"/>
</dbReference>
<dbReference type="CDD" id="cd05797">
    <property type="entry name" value="Ribosomal_L10"/>
    <property type="match status" value="1"/>
</dbReference>
<dbReference type="Gene3D" id="3.30.70.1730">
    <property type="match status" value="1"/>
</dbReference>
<dbReference type="InterPro" id="IPR001790">
    <property type="entry name" value="Ribosomal_uL10"/>
</dbReference>
<dbReference type="InterPro" id="IPR043141">
    <property type="entry name" value="Ribosomal_uL10-like_sf"/>
</dbReference>
<dbReference type="InterPro" id="IPR047865">
    <property type="entry name" value="Ribosomal_uL10_bac_type"/>
</dbReference>
<dbReference type="InterPro" id="IPR002363">
    <property type="entry name" value="Ribosomal_uL10_CS_bac"/>
</dbReference>
<dbReference type="NCBIfam" id="NF000955">
    <property type="entry name" value="PRK00099.1-1"/>
    <property type="match status" value="1"/>
</dbReference>
<dbReference type="PANTHER" id="PTHR11560">
    <property type="entry name" value="39S RIBOSOMAL PROTEIN L10, MITOCHONDRIAL"/>
    <property type="match status" value="1"/>
</dbReference>
<dbReference type="Pfam" id="PF00466">
    <property type="entry name" value="Ribosomal_L10"/>
    <property type="match status" value="1"/>
</dbReference>
<dbReference type="SUPFAM" id="SSF160369">
    <property type="entry name" value="Ribosomal protein L10-like"/>
    <property type="match status" value="1"/>
</dbReference>
<dbReference type="PROSITE" id="PS01109">
    <property type="entry name" value="RIBOSOMAL_L10"/>
    <property type="match status" value="1"/>
</dbReference>
<proteinExistence type="inferred from homology"/>
<comment type="function">
    <text evidence="1">Forms part of the ribosomal stalk, playing a central role in the interaction of the ribosome with GTP-bound translation factors.</text>
</comment>
<comment type="subunit">
    <text evidence="1">Part of the ribosomal stalk of the 50S ribosomal subunit. The N-terminus interacts with L11 and the large rRNA to form the base of the stalk. The C-terminus forms an elongated spine to which L12 dimers bind in a sequential fashion forming a multimeric L10(L12)X complex (By similarity).</text>
</comment>
<comment type="similarity">
    <text evidence="2">Belongs to the universal ribosomal protein uL10 family.</text>
</comment>
<sequence>MALNLQDKQAIVAEVSEVAKGALSAVVADSRGVTVDKMTELRKAGREAGVYMRVVRNTLMRCVVEGTPFECLKDTFVGPTLIVFSH</sequence>
<organism>
    <name type="scientific">Serratia marcescens</name>
    <dbReference type="NCBI Taxonomy" id="615"/>
    <lineage>
        <taxon>Bacteria</taxon>
        <taxon>Pseudomonadati</taxon>
        <taxon>Pseudomonadota</taxon>
        <taxon>Gammaproteobacteria</taxon>
        <taxon>Enterobacterales</taxon>
        <taxon>Yersiniaceae</taxon>
        <taxon>Serratia</taxon>
    </lineage>
</organism>